<evidence type="ECO:0000250" key="1"/>
<evidence type="ECO:0000255" key="2"/>
<evidence type="ECO:0000255" key="3">
    <source>
        <dbReference type="PROSITE-ProRule" id="PRU00316"/>
    </source>
</evidence>
<evidence type="ECO:0000256" key="4">
    <source>
        <dbReference type="SAM" id="MobiDB-lite"/>
    </source>
</evidence>
<evidence type="ECO:0000305" key="5"/>
<reference key="1">
    <citation type="journal article" date="1995" name="Proc. Natl. Acad. Sci. U.S.A.">
        <title>Expression cloning of a cDNA encoding a fish prolactin receptor.</title>
        <authorList>
            <person name="Sandra O."/>
            <person name="Sohm F."/>
            <person name="de Luze A."/>
            <person name="Prunet P."/>
            <person name="Edery M."/>
            <person name="Kelly P.A."/>
        </authorList>
    </citation>
    <scope>NUCLEOTIDE SEQUENCE [MRNA]</scope>
    <source>
        <tissue>Kidney</tissue>
    </source>
</reference>
<sequence>MMTKVGEVLLLLLLPAFVPHTDGTHYSLPGKPTEIKCRSPEKETFTCWWKPGSDGGLPTTYALYYRKEGSDVVHECPDYHTAGKNSCFFNKNNTLIWVSYNITVVATNALGKTYSDPQDIDVVYIVQPHPPEKLEVTVMKDQGWPFLRVSWEPPRKADTRSGWITLIYELRVKLEDEESEWENHAAGQQKMFNIFSLRSGGTYLIQVRCKPDHGFWSEWSSTSYVKVPEYLHREKSVWILVLVFSAFILLLLTWLIHMNSHSLKHCMLPPVPGPKIKGFDKQLLKSGKSDEVFSALVVSDFPPTTSNYEDLLVEYLEVYMPEQQELMVDKGKDHDGCLKSIGSASDSDSGRGSCDSDNLLMDKSGAPKEEQQQQNQEGDQIGKETQGPKEAWEKEAMPCANEDVVSPDASSEKVKTWPSVFSPVTPYSPLDPHNSLEMHKQHCLSNTQFPPGSPSSDHYIKEALQSSYWEVCFNNNQPYPQTEVHPQLQAHSDRNISAVNDRNAPTGLLLPTRMTEYVEVQRVNEENKVLLHPIPSGHSREKACPWVGQRDDYSKVKGVDSDNGLLLQREVVEEESMEMAGAAESCYTSSIAFTTPKQTACSPVALPVQDERVLAVSGYVDTATVFSVHT</sequence>
<protein>
    <recommendedName>
        <fullName>Prolactin receptor</fullName>
        <shortName>PRL-R</shortName>
    </recommendedName>
</protein>
<proteinExistence type="evidence at transcript level"/>
<gene>
    <name type="primary">prlr</name>
</gene>
<organism>
    <name type="scientific">Oreochromis niloticus</name>
    <name type="common">Nile tilapia</name>
    <name type="synonym">Tilapia nilotica</name>
    <dbReference type="NCBI Taxonomy" id="8128"/>
    <lineage>
        <taxon>Eukaryota</taxon>
        <taxon>Metazoa</taxon>
        <taxon>Chordata</taxon>
        <taxon>Craniata</taxon>
        <taxon>Vertebrata</taxon>
        <taxon>Euteleostomi</taxon>
        <taxon>Actinopterygii</taxon>
        <taxon>Neopterygii</taxon>
        <taxon>Teleostei</taxon>
        <taxon>Neoteleostei</taxon>
        <taxon>Acanthomorphata</taxon>
        <taxon>Ovalentaria</taxon>
        <taxon>Cichlomorphae</taxon>
        <taxon>Cichliformes</taxon>
        <taxon>Cichlidae</taxon>
        <taxon>African cichlids</taxon>
        <taxon>Pseudocrenilabrinae</taxon>
        <taxon>Oreochromini</taxon>
        <taxon>Oreochromis</taxon>
    </lineage>
</organism>
<comment type="function">
    <text>This is a receptor for the anterior pituitary hormone prolactin.</text>
</comment>
<comment type="subcellular location">
    <subcellularLocation>
        <location>Membrane</location>
        <topology>Single-pass type I membrane protein</topology>
    </subcellularLocation>
</comment>
<comment type="domain">
    <text>The WSXWS motif appears to be necessary for proper protein folding and thereby efficient intracellular transport and cell-surface receptor binding.</text>
</comment>
<comment type="domain">
    <text>The box 1 motif is required for JAK interaction and/or activation.</text>
</comment>
<comment type="similarity">
    <text evidence="5">Belongs to the type I cytokine receptor family. Type 1 subfamily.</text>
</comment>
<dbReference type="EMBL" id="L34783">
    <property type="protein sequence ID" value="AAA98997.1"/>
    <property type="molecule type" value="mRNA"/>
</dbReference>
<dbReference type="PIR" id="I51086">
    <property type="entry name" value="I51086"/>
</dbReference>
<dbReference type="RefSeq" id="NP_001266477.1">
    <property type="nucleotide sequence ID" value="NM_001279548.1"/>
</dbReference>
<dbReference type="SMR" id="Q91513"/>
<dbReference type="STRING" id="8128.ENSONIP00000009724"/>
<dbReference type="GlyCosmos" id="Q91513">
    <property type="glycosylation" value="2 sites, No reported glycans"/>
</dbReference>
<dbReference type="GeneID" id="100534586"/>
<dbReference type="KEGG" id="onl:100534586"/>
<dbReference type="CTD" id="407651"/>
<dbReference type="eggNOG" id="ENOG502R22A">
    <property type="taxonomic scope" value="Eukaryota"/>
</dbReference>
<dbReference type="InParanoid" id="Q91513"/>
<dbReference type="OrthoDB" id="8858139at2759"/>
<dbReference type="Proteomes" id="UP000005207">
    <property type="component" value="Unplaced"/>
</dbReference>
<dbReference type="GO" id="GO:0009897">
    <property type="term" value="C:external side of plasma membrane"/>
    <property type="evidence" value="ECO:0007669"/>
    <property type="project" value="TreeGrafter"/>
</dbReference>
<dbReference type="GO" id="GO:0004896">
    <property type="term" value="F:cytokine receptor activity"/>
    <property type="evidence" value="ECO:0007669"/>
    <property type="project" value="InterPro"/>
</dbReference>
<dbReference type="GO" id="GO:0046872">
    <property type="term" value="F:metal ion binding"/>
    <property type="evidence" value="ECO:0007669"/>
    <property type="project" value="UniProtKB-KW"/>
</dbReference>
<dbReference type="CDD" id="cd00063">
    <property type="entry name" value="FN3"/>
    <property type="match status" value="2"/>
</dbReference>
<dbReference type="FunFam" id="2.60.40.10:FF:000287">
    <property type="entry name" value="Prolactin receptor"/>
    <property type="match status" value="1"/>
</dbReference>
<dbReference type="FunFam" id="2.60.40.10:FF:000358">
    <property type="entry name" value="Prolactin receptor"/>
    <property type="match status" value="1"/>
</dbReference>
<dbReference type="Gene3D" id="2.60.40.10">
    <property type="entry name" value="Immunoglobulins"/>
    <property type="match status" value="2"/>
</dbReference>
<dbReference type="InterPro" id="IPR003961">
    <property type="entry name" value="FN3_dom"/>
</dbReference>
<dbReference type="InterPro" id="IPR036116">
    <property type="entry name" value="FN3_sf"/>
</dbReference>
<dbReference type="InterPro" id="IPR015152">
    <property type="entry name" value="Growth/epo_recpt_lig-bind"/>
</dbReference>
<dbReference type="InterPro" id="IPR013783">
    <property type="entry name" value="Ig-like_fold"/>
</dbReference>
<dbReference type="InterPro" id="IPR003528">
    <property type="entry name" value="Long_hematopoietin_rcpt_CS"/>
</dbReference>
<dbReference type="PANTHER" id="PTHR23037">
    <property type="entry name" value="CYTOKINE RECEPTOR"/>
    <property type="match status" value="1"/>
</dbReference>
<dbReference type="PANTHER" id="PTHR23037:SF46">
    <property type="entry name" value="INTERLEUKIN 5 RECEPTOR SUBUNIT ALPHA"/>
    <property type="match status" value="1"/>
</dbReference>
<dbReference type="Pfam" id="PF09067">
    <property type="entry name" value="EpoR_lig-bind"/>
    <property type="match status" value="1"/>
</dbReference>
<dbReference type="SMART" id="SM00060">
    <property type="entry name" value="FN3"/>
    <property type="match status" value="2"/>
</dbReference>
<dbReference type="SUPFAM" id="SSF49265">
    <property type="entry name" value="Fibronectin type III"/>
    <property type="match status" value="2"/>
</dbReference>
<dbReference type="PROSITE" id="PS50853">
    <property type="entry name" value="FN3"/>
    <property type="match status" value="2"/>
</dbReference>
<dbReference type="PROSITE" id="PS01352">
    <property type="entry name" value="HEMATOPO_REC_L_F1"/>
    <property type="match status" value="1"/>
</dbReference>
<name>PRLR_ORENI</name>
<feature type="signal peptide" evidence="1">
    <location>
        <begin position="1"/>
        <end position="23"/>
    </location>
</feature>
<feature type="chain" id="PRO_0000010983" description="Prolactin receptor">
    <location>
        <begin position="24"/>
        <end position="630"/>
    </location>
</feature>
<feature type="topological domain" description="Extracellular" evidence="2">
    <location>
        <begin position="24"/>
        <end position="234"/>
    </location>
</feature>
<feature type="transmembrane region" description="Helical" evidence="2">
    <location>
        <begin position="235"/>
        <end position="258"/>
    </location>
</feature>
<feature type="topological domain" description="Cytoplasmic" evidence="2">
    <location>
        <begin position="259"/>
        <end position="630"/>
    </location>
</feature>
<feature type="domain" description="Fibronectin type-III 1" evidence="3">
    <location>
        <begin position="31"/>
        <end position="128"/>
    </location>
</feature>
<feature type="domain" description="Fibronectin type-III 2" evidence="3">
    <location>
        <begin position="130"/>
        <end position="230"/>
    </location>
</feature>
<feature type="region of interest" description="Disordered" evidence="4">
    <location>
        <begin position="339"/>
        <end position="389"/>
    </location>
</feature>
<feature type="short sequence motif" description="WSXWS motif">
    <location>
        <begin position="216"/>
        <end position="220"/>
    </location>
</feature>
<feature type="short sequence motif" description="Box 1 motif">
    <location>
        <begin position="267"/>
        <end position="275"/>
    </location>
</feature>
<feature type="compositionally biased region" description="Low complexity" evidence="4">
    <location>
        <begin position="340"/>
        <end position="357"/>
    </location>
</feature>
<feature type="compositionally biased region" description="Basic and acidic residues" evidence="4">
    <location>
        <begin position="380"/>
        <end position="389"/>
    </location>
</feature>
<feature type="binding site" evidence="1">
    <location>
        <position position="212"/>
    </location>
    <ligand>
        <name>Zn(2+)</name>
        <dbReference type="ChEBI" id="CHEBI:29105"/>
    </ligand>
</feature>
<feature type="binding site" evidence="1">
    <location>
        <position position="213"/>
    </location>
    <ligand>
        <name>Zn(2+)</name>
        <dbReference type="ChEBI" id="CHEBI:29105"/>
    </ligand>
</feature>
<feature type="glycosylation site" description="N-linked (GlcNAc...) asparagine" evidence="2">
    <location>
        <position position="92"/>
    </location>
</feature>
<feature type="glycosylation site" description="N-linked (GlcNAc...) asparagine" evidence="2">
    <location>
        <position position="101"/>
    </location>
</feature>
<feature type="disulfide bond" evidence="1">
    <location>
        <begin position="37"/>
        <end position="47"/>
    </location>
</feature>
<feature type="disulfide bond" evidence="1">
    <location>
        <begin position="76"/>
        <end position="87"/>
    </location>
</feature>
<accession>Q91513</accession>
<keyword id="KW-1015">Disulfide bond</keyword>
<keyword id="KW-0325">Glycoprotein</keyword>
<keyword id="KW-0472">Membrane</keyword>
<keyword id="KW-0479">Metal-binding</keyword>
<keyword id="KW-0675">Receptor</keyword>
<keyword id="KW-1185">Reference proteome</keyword>
<keyword id="KW-0677">Repeat</keyword>
<keyword id="KW-0732">Signal</keyword>
<keyword id="KW-0812">Transmembrane</keyword>
<keyword id="KW-1133">Transmembrane helix</keyword>
<keyword id="KW-0862">Zinc</keyword>